<name>HSLU_RHILO</name>
<comment type="function">
    <text evidence="1">ATPase subunit of a proteasome-like degradation complex; this subunit has chaperone activity. The binding of ATP and its subsequent hydrolysis by HslU are essential for unfolding of protein substrates subsequently hydrolyzed by HslV. HslU recognizes the N-terminal part of its protein substrates and unfolds these before they are guided to HslV for hydrolysis.</text>
</comment>
<comment type="subunit">
    <text evidence="1">A double ring-shaped homohexamer of HslV is capped on each side by a ring-shaped HslU homohexamer. The assembly of the HslU/HslV complex is dependent on binding of ATP.</text>
</comment>
<comment type="subcellular location">
    <subcellularLocation>
        <location evidence="1">Cytoplasm</location>
    </subcellularLocation>
</comment>
<comment type="similarity">
    <text evidence="1">Belongs to the ClpX chaperone family. HslU subfamily.</text>
</comment>
<comment type="sequence caution" evidence="2">
    <conflict type="erroneous initiation">
        <sequence resource="EMBL-CDS" id="BAB51530"/>
    </conflict>
</comment>
<organism>
    <name type="scientific">Mesorhizobium japonicum (strain LMG 29417 / CECT 9101 / MAFF 303099)</name>
    <name type="common">Mesorhizobium loti (strain MAFF 303099)</name>
    <dbReference type="NCBI Taxonomy" id="266835"/>
    <lineage>
        <taxon>Bacteria</taxon>
        <taxon>Pseudomonadati</taxon>
        <taxon>Pseudomonadota</taxon>
        <taxon>Alphaproteobacteria</taxon>
        <taxon>Hyphomicrobiales</taxon>
        <taxon>Phyllobacteriaceae</taxon>
        <taxon>Mesorhizobium</taxon>
    </lineage>
</organism>
<dbReference type="EMBL" id="BA000012">
    <property type="protein sequence ID" value="BAB51530.1"/>
    <property type="status" value="ALT_INIT"/>
    <property type="molecule type" value="Genomic_DNA"/>
</dbReference>
<dbReference type="RefSeq" id="WP_032932595.1">
    <property type="nucleotide sequence ID" value="NC_002678.2"/>
</dbReference>
<dbReference type="SMR" id="Q98CU1"/>
<dbReference type="GeneID" id="66680767"/>
<dbReference type="KEGG" id="mlo:mll5004"/>
<dbReference type="eggNOG" id="COG1220">
    <property type="taxonomic scope" value="Bacteria"/>
</dbReference>
<dbReference type="HOGENOM" id="CLU_033123_0_0_5"/>
<dbReference type="Proteomes" id="UP000000552">
    <property type="component" value="Chromosome"/>
</dbReference>
<dbReference type="GO" id="GO:0009376">
    <property type="term" value="C:HslUV protease complex"/>
    <property type="evidence" value="ECO:0007669"/>
    <property type="project" value="UniProtKB-UniRule"/>
</dbReference>
<dbReference type="GO" id="GO:0005524">
    <property type="term" value="F:ATP binding"/>
    <property type="evidence" value="ECO:0007669"/>
    <property type="project" value="UniProtKB-UniRule"/>
</dbReference>
<dbReference type="GO" id="GO:0016887">
    <property type="term" value="F:ATP hydrolysis activity"/>
    <property type="evidence" value="ECO:0007669"/>
    <property type="project" value="InterPro"/>
</dbReference>
<dbReference type="GO" id="GO:0008233">
    <property type="term" value="F:peptidase activity"/>
    <property type="evidence" value="ECO:0007669"/>
    <property type="project" value="InterPro"/>
</dbReference>
<dbReference type="GO" id="GO:0036402">
    <property type="term" value="F:proteasome-activating activity"/>
    <property type="evidence" value="ECO:0007669"/>
    <property type="project" value="UniProtKB-UniRule"/>
</dbReference>
<dbReference type="GO" id="GO:0043335">
    <property type="term" value="P:protein unfolding"/>
    <property type="evidence" value="ECO:0007669"/>
    <property type="project" value="UniProtKB-UniRule"/>
</dbReference>
<dbReference type="GO" id="GO:0051603">
    <property type="term" value="P:proteolysis involved in protein catabolic process"/>
    <property type="evidence" value="ECO:0007669"/>
    <property type="project" value="TreeGrafter"/>
</dbReference>
<dbReference type="CDD" id="cd19498">
    <property type="entry name" value="RecA-like_HslU"/>
    <property type="match status" value="1"/>
</dbReference>
<dbReference type="FunFam" id="3.40.50.300:FF:000213">
    <property type="entry name" value="ATP-dependent protease ATPase subunit HslU"/>
    <property type="match status" value="1"/>
</dbReference>
<dbReference type="FunFam" id="3.40.50.300:FF:000220">
    <property type="entry name" value="ATP-dependent protease ATPase subunit HslU"/>
    <property type="match status" value="1"/>
</dbReference>
<dbReference type="Gene3D" id="1.10.8.60">
    <property type="match status" value="1"/>
</dbReference>
<dbReference type="Gene3D" id="3.40.50.300">
    <property type="entry name" value="P-loop containing nucleotide triphosphate hydrolases"/>
    <property type="match status" value="2"/>
</dbReference>
<dbReference type="HAMAP" id="MF_00249">
    <property type="entry name" value="HslU"/>
    <property type="match status" value="1"/>
</dbReference>
<dbReference type="InterPro" id="IPR003593">
    <property type="entry name" value="AAA+_ATPase"/>
</dbReference>
<dbReference type="InterPro" id="IPR050052">
    <property type="entry name" value="ATP-dep_Clp_protease_ClpX"/>
</dbReference>
<dbReference type="InterPro" id="IPR003959">
    <property type="entry name" value="ATPase_AAA_core"/>
</dbReference>
<dbReference type="InterPro" id="IPR019489">
    <property type="entry name" value="Clp_ATPase_C"/>
</dbReference>
<dbReference type="InterPro" id="IPR004491">
    <property type="entry name" value="HslU"/>
</dbReference>
<dbReference type="InterPro" id="IPR027417">
    <property type="entry name" value="P-loop_NTPase"/>
</dbReference>
<dbReference type="NCBIfam" id="TIGR00390">
    <property type="entry name" value="hslU"/>
    <property type="match status" value="1"/>
</dbReference>
<dbReference type="NCBIfam" id="NF003544">
    <property type="entry name" value="PRK05201.1"/>
    <property type="match status" value="1"/>
</dbReference>
<dbReference type="PANTHER" id="PTHR48102">
    <property type="entry name" value="ATP-DEPENDENT CLP PROTEASE ATP-BINDING SUBUNIT CLPX-LIKE, MITOCHONDRIAL-RELATED"/>
    <property type="match status" value="1"/>
</dbReference>
<dbReference type="PANTHER" id="PTHR48102:SF3">
    <property type="entry name" value="ATP-DEPENDENT PROTEASE ATPASE SUBUNIT HSLU"/>
    <property type="match status" value="1"/>
</dbReference>
<dbReference type="Pfam" id="PF00004">
    <property type="entry name" value="AAA"/>
    <property type="match status" value="1"/>
</dbReference>
<dbReference type="Pfam" id="PF07724">
    <property type="entry name" value="AAA_2"/>
    <property type="match status" value="1"/>
</dbReference>
<dbReference type="SMART" id="SM00382">
    <property type="entry name" value="AAA"/>
    <property type="match status" value="1"/>
</dbReference>
<dbReference type="SMART" id="SM01086">
    <property type="entry name" value="ClpB_D2-small"/>
    <property type="match status" value="1"/>
</dbReference>
<dbReference type="SUPFAM" id="SSF52540">
    <property type="entry name" value="P-loop containing nucleoside triphosphate hydrolases"/>
    <property type="match status" value="1"/>
</dbReference>
<protein>
    <recommendedName>
        <fullName evidence="1">ATP-dependent protease ATPase subunit HslU</fullName>
    </recommendedName>
    <alternativeName>
        <fullName evidence="1">Unfoldase HslU</fullName>
    </alternativeName>
</protein>
<sequence>MTTFSPREIVSELDRFIIGQKDAKRAVAIALRNRWRRQQLEGQMREEVMPKNILMIGPTGVGKTEISRRLARLAGAPFVKVEATKFTEVGYVGRDVEQIIRDLVEIAIGLVREKMREDVKARAHINAEERVLEALVGKTASPATRDSFRKKLRDGELDDKEIEIEVADTGNGGMPGFEIPGMPGANIGVLNINDMLSKAMGGKKTKSRKTTVKESYDLLVSDESDKLLDQDEVVRRALDATENDGIVFLDEIDKIAARSDISGGPSREGVQRDLLPLVEGTTVATKYGPVKTDHILFIASGAFHVSKPSDLLPELQGRLPIRVELRALEKQDFVRILTETEASLIKQYIALMKTEGVDLTFTDDAIDSLAGIAVDLNDSVENIGARRLQTVMERVLDEISYDAPDRNGTSVTIDAAYVEKHVGDLSRNTDLSRFIL</sequence>
<accession>Q98CU1</accession>
<keyword id="KW-0067">ATP-binding</keyword>
<keyword id="KW-0143">Chaperone</keyword>
<keyword id="KW-0963">Cytoplasm</keyword>
<keyword id="KW-0547">Nucleotide-binding</keyword>
<feature type="chain" id="PRO_0000160535" description="ATP-dependent protease ATPase subunit HslU">
    <location>
        <begin position="1"/>
        <end position="436"/>
    </location>
</feature>
<feature type="binding site" evidence="1">
    <location>
        <position position="18"/>
    </location>
    <ligand>
        <name>ATP</name>
        <dbReference type="ChEBI" id="CHEBI:30616"/>
    </ligand>
</feature>
<feature type="binding site" evidence="1">
    <location>
        <begin position="60"/>
        <end position="65"/>
    </location>
    <ligand>
        <name>ATP</name>
        <dbReference type="ChEBI" id="CHEBI:30616"/>
    </ligand>
</feature>
<feature type="binding site" evidence="1">
    <location>
        <position position="250"/>
    </location>
    <ligand>
        <name>ATP</name>
        <dbReference type="ChEBI" id="CHEBI:30616"/>
    </ligand>
</feature>
<feature type="binding site" evidence="1">
    <location>
        <position position="314"/>
    </location>
    <ligand>
        <name>ATP</name>
        <dbReference type="ChEBI" id="CHEBI:30616"/>
    </ligand>
</feature>
<feature type="binding site" evidence="1">
    <location>
        <position position="386"/>
    </location>
    <ligand>
        <name>ATP</name>
        <dbReference type="ChEBI" id="CHEBI:30616"/>
    </ligand>
</feature>
<reference key="1">
    <citation type="journal article" date="2000" name="DNA Res.">
        <title>Complete genome structure of the nitrogen-fixing symbiotic bacterium Mesorhizobium loti.</title>
        <authorList>
            <person name="Kaneko T."/>
            <person name="Nakamura Y."/>
            <person name="Sato S."/>
            <person name="Asamizu E."/>
            <person name="Kato T."/>
            <person name="Sasamoto S."/>
            <person name="Watanabe A."/>
            <person name="Idesawa K."/>
            <person name="Ishikawa A."/>
            <person name="Kawashima K."/>
            <person name="Kimura T."/>
            <person name="Kishida Y."/>
            <person name="Kiyokawa C."/>
            <person name="Kohara M."/>
            <person name="Matsumoto M."/>
            <person name="Matsuno A."/>
            <person name="Mochizuki Y."/>
            <person name="Nakayama S."/>
            <person name="Nakazaki N."/>
            <person name="Shimpo S."/>
            <person name="Sugimoto M."/>
            <person name="Takeuchi C."/>
            <person name="Yamada M."/>
            <person name="Tabata S."/>
        </authorList>
    </citation>
    <scope>NUCLEOTIDE SEQUENCE [LARGE SCALE GENOMIC DNA]</scope>
    <source>
        <strain>LMG 29417 / CECT 9101 / MAFF 303099</strain>
    </source>
</reference>
<evidence type="ECO:0000255" key="1">
    <source>
        <dbReference type="HAMAP-Rule" id="MF_00249"/>
    </source>
</evidence>
<evidence type="ECO:0000305" key="2"/>
<gene>
    <name evidence="1" type="primary">hslU</name>
    <name type="ordered locus">mll5004</name>
</gene>
<proteinExistence type="inferred from homology"/>